<name>RL4_TRIV2</name>
<organism>
    <name type="scientific">Trichormus variabilis (strain ATCC 29413 / PCC 7937)</name>
    <name type="common">Anabaena variabilis</name>
    <dbReference type="NCBI Taxonomy" id="240292"/>
    <lineage>
        <taxon>Bacteria</taxon>
        <taxon>Bacillati</taxon>
        <taxon>Cyanobacteriota</taxon>
        <taxon>Cyanophyceae</taxon>
        <taxon>Nostocales</taxon>
        <taxon>Nostocaceae</taxon>
        <taxon>Trichormus</taxon>
    </lineage>
</organism>
<proteinExistence type="inferred from homology"/>
<dbReference type="EMBL" id="CP000117">
    <property type="protein sequence ID" value="ABA20316.1"/>
    <property type="molecule type" value="Genomic_DNA"/>
</dbReference>
<dbReference type="SMR" id="Q3MFC0"/>
<dbReference type="STRING" id="240292.Ava_0692"/>
<dbReference type="KEGG" id="ava:Ava_0692"/>
<dbReference type="eggNOG" id="COG0088">
    <property type="taxonomic scope" value="Bacteria"/>
</dbReference>
<dbReference type="HOGENOM" id="CLU_041575_5_2_3"/>
<dbReference type="Proteomes" id="UP000002533">
    <property type="component" value="Chromosome"/>
</dbReference>
<dbReference type="GO" id="GO:1990904">
    <property type="term" value="C:ribonucleoprotein complex"/>
    <property type="evidence" value="ECO:0007669"/>
    <property type="project" value="UniProtKB-KW"/>
</dbReference>
<dbReference type="GO" id="GO:0005840">
    <property type="term" value="C:ribosome"/>
    <property type="evidence" value="ECO:0007669"/>
    <property type="project" value="UniProtKB-KW"/>
</dbReference>
<dbReference type="GO" id="GO:0019843">
    <property type="term" value="F:rRNA binding"/>
    <property type="evidence" value="ECO:0007669"/>
    <property type="project" value="UniProtKB-UniRule"/>
</dbReference>
<dbReference type="GO" id="GO:0003735">
    <property type="term" value="F:structural constituent of ribosome"/>
    <property type="evidence" value="ECO:0007669"/>
    <property type="project" value="InterPro"/>
</dbReference>
<dbReference type="GO" id="GO:0006412">
    <property type="term" value="P:translation"/>
    <property type="evidence" value="ECO:0007669"/>
    <property type="project" value="UniProtKB-UniRule"/>
</dbReference>
<dbReference type="FunFam" id="3.40.1370.10:FF:000012">
    <property type="entry name" value="50S ribosomal protein L4"/>
    <property type="match status" value="1"/>
</dbReference>
<dbReference type="Gene3D" id="3.40.1370.10">
    <property type="match status" value="1"/>
</dbReference>
<dbReference type="HAMAP" id="MF_01328_B">
    <property type="entry name" value="Ribosomal_uL4_B"/>
    <property type="match status" value="1"/>
</dbReference>
<dbReference type="InterPro" id="IPR002136">
    <property type="entry name" value="Ribosomal_uL4"/>
</dbReference>
<dbReference type="InterPro" id="IPR013005">
    <property type="entry name" value="Ribosomal_uL4-like"/>
</dbReference>
<dbReference type="InterPro" id="IPR023574">
    <property type="entry name" value="Ribosomal_uL4_dom_sf"/>
</dbReference>
<dbReference type="NCBIfam" id="TIGR03953">
    <property type="entry name" value="rplD_bact"/>
    <property type="match status" value="1"/>
</dbReference>
<dbReference type="PANTHER" id="PTHR10746">
    <property type="entry name" value="50S RIBOSOMAL PROTEIN L4"/>
    <property type="match status" value="1"/>
</dbReference>
<dbReference type="PANTHER" id="PTHR10746:SF17">
    <property type="entry name" value="LARGE RIBOSOMAL SUBUNIT PROTEIN UL4C"/>
    <property type="match status" value="1"/>
</dbReference>
<dbReference type="Pfam" id="PF00573">
    <property type="entry name" value="Ribosomal_L4"/>
    <property type="match status" value="1"/>
</dbReference>
<dbReference type="SUPFAM" id="SSF52166">
    <property type="entry name" value="Ribosomal protein L4"/>
    <property type="match status" value="1"/>
</dbReference>
<evidence type="ECO:0000255" key="1">
    <source>
        <dbReference type="HAMAP-Rule" id="MF_01328"/>
    </source>
</evidence>
<evidence type="ECO:0000256" key="2">
    <source>
        <dbReference type="SAM" id="MobiDB-lite"/>
    </source>
</evidence>
<evidence type="ECO:0000305" key="3"/>
<reference key="1">
    <citation type="journal article" date="2014" name="Stand. Genomic Sci.">
        <title>Complete genome sequence of Anabaena variabilis ATCC 29413.</title>
        <authorList>
            <person name="Thiel T."/>
            <person name="Pratte B.S."/>
            <person name="Zhong J."/>
            <person name="Goodwin L."/>
            <person name="Copeland A."/>
            <person name="Lucas S."/>
            <person name="Han C."/>
            <person name="Pitluck S."/>
            <person name="Land M.L."/>
            <person name="Kyrpides N.C."/>
            <person name="Woyke T."/>
        </authorList>
    </citation>
    <scope>NUCLEOTIDE SEQUENCE [LARGE SCALE GENOMIC DNA]</scope>
    <source>
        <strain>ATCC 29413 / PCC 7937</strain>
    </source>
</reference>
<keyword id="KW-0687">Ribonucleoprotein</keyword>
<keyword id="KW-0689">Ribosomal protein</keyword>
<keyword id="KW-0694">RNA-binding</keyword>
<keyword id="KW-0699">rRNA-binding</keyword>
<protein>
    <recommendedName>
        <fullName evidence="1">Large ribosomal subunit protein uL4</fullName>
    </recommendedName>
    <alternativeName>
        <fullName evidence="3">50S ribosomal protein L4</fullName>
    </alternativeName>
</protein>
<accession>Q3MFC0</accession>
<sequence>MVESVVKNWQGEQVGQKTFELRVAKETTAAHIVHRALVRQQTNARQGTASTKTRAEVRGGGRKPWRQKGTGRARAGSIRSPLWRGGGVIFGPKPRDFDLKMNRKERRLALRTALVSRIDDLILVEEFSNELSRPKTKDLVAAFTRWGAEPESKILLILSEFPENVYLSARNIENLKLIAADQLNVYDLLHADKIVVTTSALEKIQEVYNG</sequence>
<comment type="function">
    <text evidence="1">One of the primary rRNA binding proteins, this protein initially binds near the 5'-end of the 23S rRNA. It is important during the early stages of 50S assembly. It makes multiple contacts with different domains of the 23S rRNA in the assembled 50S subunit and ribosome.</text>
</comment>
<comment type="function">
    <text evidence="1">Forms part of the polypeptide exit tunnel.</text>
</comment>
<comment type="subunit">
    <text evidence="1">Part of the 50S ribosomal subunit.</text>
</comment>
<comment type="similarity">
    <text evidence="1">Belongs to the universal ribosomal protein uL4 family.</text>
</comment>
<gene>
    <name evidence="1" type="primary">rplD</name>
    <name evidence="1" type="synonym">rpl4</name>
    <name type="ordered locus">Ava_0692</name>
</gene>
<feature type="chain" id="PRO_0000242331" description="Large ribosomal subunit protein uL4">
    <location>
        <begin position="1"/>
        <end position="210"/>
    </location>
</feature>
<feature type="region of interest" description="Disordered" evidence="2">
    <location>
        <begin position="41"/>
        <end position="71"/>
    </location>
</feature>
<feature type="compositionally biased region" description="Polar residues" evidence="2">
    <location>
        <begin position="41"/>
        <end position="52"/>
    </location>
</feature>
<feature type="compositionally biased region" description="Basic residues" evidence="2">
    <location>
        <begin position="60"/>
        <end position="71"/>
    </location>
</feature>